<dbReference type="EC" id="4.2.3.4" evidence="1"/>
<dbReference type="EMBL" id="CP000308">
    <property type="protein sequence ID" value="ABG15279.1"/>
    <property type="molecule type" value="Genomic_DNA"/>
</dbReference>
<dbReference type="RefSeq" id="WP_002208898.1">
    <property type="nucleotide sequence ID" value="NZ_CP009906.1"/>
</dbReference>
<dbReference type="SMR" id="Q1C2P3"/>
<dbReference type="GeneID" id="57974449"/>
<dbReference type="KEGG" id="ypa:YPA_3317"/>
<dbReference type="UniPathway" id="UPA00053">
    <property type="reaction ID" value="UER00085"/>
</dbReference>
<dbReference type="Proteomes" id="UP000001971">
    <property type="component" value="Chromosome"/>
</dbReference>
<dbReference type="GO" id="GO:0005737">
    <property type="term" value="C:cytoplasm"/>
    <property type="evidence" value="ECO:0007669"/>
    <property type="project" value="UniProtKB-SubCell"/>
</dbReference>
<dbReference type="GO" id="GO:0003856">
    <property type="term" value="F:3-dehydroquinate synthase activity"/>
    <property type="evidence" value="ECO:0007669"/>
    <property type="project" value="UniProtKB-UniRule"/>
</dbReference>
<dbReference type="GO" id="GO:0046872">
    <property type="term" value="F:metal ion binding"/>
    <property type="evidence" value="ECO:0007669"/>
    <property type="project" value="UniProtKB-KW"/>
</dbReference>
<dbReference type="GO" id="GO:0000166">
    <property type="term" value="F:nucleotide binding"/>
    <property type="evidence" value="ECO:0007669"/>
    <property type="project" value="UniProtKB-KW"/>
</dbReference>
<dbReference type="GO" id="GO:0008652">
    <property type="term" value="P:amino acid biosynthetic process"/>
    <property type="evidence" value="ECO:0007669"/>
    <property type="project" value="UniProtKB-KW"/>
</dbReference>
<dbReference type="GO" id="GO:0009073">
    <property type="term" value="P:aromatic amino acid family biosynthetic process"/>
    <property type="evidence" value="ECO:0007669"/>
    <property type="project" value="UniProtKB-KW"/>
</dbReference>
<dbReference type="GO" id="GO:0009423">
    <property type="term" value="P:chorismate biosynthetic process"/>
    <property type="evidence" value="ECO:0007669"/>
    <property type="project" value="UniProtKB-UniRule"/>
</dbReference>
<dbReference type="CDD" id="cd08195">
    <property type="entry name" value="DHQS"/>
    <property type="match status" value="1"/>
</dbReference>
<dbReference type="FunFam" id="1.20.1090.10:FF:000002">
    <property type="entry name" value="3-dehydroquinate synthase"/>
    <property type="match status" value="1"/>
</dbReference>
<dbReference type="FunFam" id="3.40.50.1970:FF:000001">
    <property type="entry name" value="3-dehydroquinate synthase"/>
    <property type="match status" value="1"/>
</dbReference>
<dbReference type="Gene3D" id="3.40.50.1970">
    <property type="match status" value="1"/>
</dbReference>
<dbReference type="Gene3D" id="1.20.1090.10">
    <property type="entry name" value="Dehydroquinate synthase-like - alpha domain"/>
    <property type="match status" value="1"/>
</dbReference>
<dbReference type="HAMAP" id="MF_00110">
    <property type="entry name" value="DHQ_synthase"/>
    <property type="match status" value="1"/>
</dbReference>
<dbReference type="InterPro" id="IPR050071">
    <property type="entry name" value="Dehydroquinate_synthase"/>
</dbReference>
<dbReference type="InterPro" id="IPR016037">
    <property type="entry name" value="DHQ_synth_AroB"/>
</dbReference>
<dbReference type="InterPro" id="IPR030963">
    <property type="entry name" value="DHQ_synth_fam"/>
</dbReference>
<dbReference type="InterPro" id="IPR030960">
    <property type="entry name" value="DHQS/DOIS_N"/>
</dbReference>
<dbReference type="InterPro" id="IPR056179">
    <property type="entry name" value="DHQS_C"/>
</dbReference>
<dbReference type="NCBIfam" id="TIGR01357">
    <property type="entry name" value="aroB"/>
    <property type="match status" value="1"/>
</dbReference>
<dbReference type="PANTHER" id="PTHR43622">
    <property type="entry name" value="3-DEHYDROQUINATE SYNTHASE"/>
    <property type="match status" value="1"/>
</dbReference>
<dbReference type="PANTHER" id="PTHR43622:SF7">
    <property type="entry name" value="3-DEHYDROQUINATE SYNTHASE, CHLOROPLASTIC"/>
    <property type="match status" value="1"/>
</dbReference>
<dbReference type="Pfam" id="PF01761">
    <property type="entry name" value="DHQ_synthase"/>
    <property type="match status" value="1"/>
</dbReference>
<dbReference type="Pfam" id="PF24621">
    <property type="entry name" value="DHQS_C"/>
    <property type="match status" value="1"/>
</dbReference>
<dbReference type="PIRSF" id="PIRSF001455">
    <property type="entry name" value="DHQ_synth"/>
    <property type="match status" value="1"/>
</dbReference>
<dbReference type="SUPFAM" id="SSF56796">
    <property type="entry name" value="Dehydroquinate synthase-like"/>
    <property type="match status" value="1"/>
</dbReference>
<reference key="1">
    <citation type="journal article" date="2006" name="J. Bacteriol.">
        <title>Complete genome sequence of Yersinia pestis strains Antiqua and Nepal516: evidence of gene reduction in an emerging pathogen.</title>
        <authorList>
            <person name="Chain P.S.G."/>
            <person name="Hu P."/>
            <person name="Malfatti S.A."/>
            <person name="Radnedge L."/>
            <person name="Larimer F."/>
            <person name="Vergez L.M."/>
            <person name="Worsham P."/>
            <person name="Chu M.C."/>
            <person name="Andersen G.L."/>
        </authorList>
    </citation>
    <scope>NUCLEOTIDE SEQUENCE [LARGE SCALE GENOMIC DNA]</scope>
    <source>
        <strain>Antiqua</strain>
    </source>
</reference>
<feature type="chain" id="PRO_1000094659" description="3-dehydroquinate synthase">
    <location>
        <begin position="1"/>
        <end position="362"/>
    </location>
</feature>
<feature type="binding site" evidence="1">
    <location>
        <begin position="71"/>
        <end position="76"/>
    </location>
    <ligand>
        <name>NAD(+)</name>
        <dbReference type="ChEBI" id="CHEBI:57540"/>
    </ligand>
</feature>
<feature type="binding site" evidence="1">
    <location>
        <begin position="105"/>
        <end position="109"/>
    </location>
    <ligand>
        <name>NAD(+)</name>
        <dbReference type="ChEBI" id="CHEBI:57540"/>
    </ligand>
</feature>
<feature type="binding site" evidence="1">
    <location>
        <begin position="129"/>
        <end position="130"/>
    </location>
    <ligand>
        <name>NAD(+)</name>
        <dbReference type="ChEBI" id="CHEBI:57540"/>
    </ligand>
</feature>
<feature type="binding site" evidence="1">
    <location>
        <position position="142"/>
    </location>
    <ligand>
        <name>NAD(+)</name>
        <dbReference type="ChEBI" id="CHEBI:57540"/>
    </ligand>
</feature>
<feature type="binding site" evidence="1">
    <location>
        <position position="151"/>
    </location>
    <ligand>
        <name>NAD(+)</name>
        <dbReference type="ChEBI" id="CHEBI:57540"/>
    </ligand>
</feature>
<feature type="binding site" evidence="1">
    <location>
        <begin position="169"/>
        <end position="172"/>
    </location>
    <ligand>
        <name>NAD(+)</name>
        <dbReference type="ChEBI" id="CHEBI:57540"/>
    </ligand>
</feature>
<feature type="binding site" evidence="1">
    <location>
        <position position="184"/>
    </location>
    <ligand>
        <name>Zn(2+)</name>
        <dbReference type="ChEBI" id="CHEBI:29105"/>
    </ligand>
</feature>
<feature type="binding site" evidence="1">
    <location>
        <position position="248"/>
    </location>
    <ligand>
        <name>Zn(2+)</name>
        <dbReference type="ChEBI" id="CHEBI:29105"/>
    </ligand>
</feature>
<feature type="binding site" evidence="1">
    <location>
        <position position="265"/>
    </location>
    <ligand>
        <name>Zn(2+)</name>
        <dbReference type="ChEBI" id="CHEBI:29105"/>
    </ligand>
</feature>
<evidence type="ECO:0000255" key="1">
    <source>
        <dbReference type="HAMAP-Rule" id="MF_00110"/>
    </source>
</evidence>
<comment type="function">
    <text evidence="1">Catalyzes the conversion of 3-deoxy-D-arabino-heptulosonate 7-phosphate (DAHP) to dehydroquinate (DHQ).</text>
</comment>
<comment type="catalytic activity">
    <reaction evidence="1">
        <text>7-phospho-2-dehydro-3-deoxy-D-arabino-heptonate = 3-dehydroquinate + phosphate</text>
        <dbReference type="Rhea" id="RHEA:21968"/>
        <dbReference type="ChEBI" id="CHEBI:32364"/>
        <dbReference type="ChEBI" id="CHEBI:43474"/>
        <dbReference type="ChEBI" id="CHEBI:58394"/>
        <dbReference type="EC" id="4.2.3.4"/>
    </reaction>
</comment>
<comment type="cofactor">
    <cofactor evidence="1">
        <name>Co(2+)</name>
        <dbReference type="ChEBI" id="CHEBI:48828"/>
    </cofactor>
    <cofactor evidence="1">
        <name>Zn(2+)</name>
        <dbReference type="ChEBI" id="CHEBI:29105"/>
    </cofactor>
    <text evidence="1">Binds 1 divalent metal cation per subunit. Can use either Co(2+) or Zn(2+).</text>
</comment>
<comment type="cofactor">
    <cofactor evidence="1">
        <name>NAD(+)</name>
        <dbReference type="ChEBI" id="CHEBI:57540"/>
    </cofactor>
</comment>
<comment type="pathway">
    <text evidence="1">Metabolic intermediate biosynthesis; chorismate biosynthesis; chorismate from D-erythrose 4-phosphate and phosphoenolpyruvate: step 2/7.</text>
</comment>
<comment type="subcellular location">
    <subcellularLocation>
        <location evidence="1">Cytoplasm</location>
    </subcellularLocation>
</comment>
<comment type="similarity">
    <text evidence="1">Belongs to the sugar phosphate cyclases superfamily. Dehydroquinate synthase family.</text>
</comment>
<sequence length="362" mass="38837">MEKITVTLGERSYPITIAAGLFNDPASFKPLKAGDQVMLVTNQTLAPLYLDSLRAVLEHGGIKVDQVILPDGEQYKSLSVMEQVFSALLEKPHGRDTTLVALGGGVVGDLTGFAAACYQRGVRFIQVPTTLLSQVDSSVGGKTAVNHPLGKNMIGAFYQPASVVVDLNCLKTLPPRELASGLAEVIKYGIILDAAFFDWLENNIDALLALDMSALAYCIRRCCELKADVVAADEREESGARALLNLGHTYGHAIEAEMGYGVWLHGEAVAAGMVMAAQTSRRLGQLSVSDVERIKKLLLRAGLPVCGPKEMAPESYLPHMMRDKKVLAGELRLVLPTAIGKSEIRGGVAHDMVLASIADCRP</sequence>
<gene>
    <name evidence="1" type="primary">aroB</name>
    <name type="ordered locus">YPA_3317</name>
</gene>
<accession>Q1C2P3</accession>
<protein>
    <recommendedName>
        <fullName evidence="1">3-dehydroquinate synthase</fullName>
        <shortName evidence="1">DHQS</shortName>
        <ecNumber evidence="1">4.2.3.4</ecNumber>
    </recommendedName>
</protein>
<name>AROB_YERPA</name>
<organism>
    <name type="scientific">Yersinia pestis bv. Antiqua (strain Antiqua)</name>
    <dbReference type="NCBI Taxonomy" id="360102"/>
    <lineage>
        <taxon>Bacteria</taxon>
        <taxon>Pseudomonadati</taxon>
        <taxon>Pseudomonadota</taxon>
        <taxon>Gammaproteobacteria</taxon>
        <taxon>Enterobacterales</taxon>
        <taxon>Yersiniaceae</taxon>
        <taxon>Yersinia</taxon>
    </lineage>
</organism>
<keyword id="KW-0028">Amino-acid biosynthesis</keyword>
<keyword id="KW-0057">Aromatic amino acid biosynthesis</keyword>
<keyword id="KW-0170">Cobalt</keyword>
<keyword id="KW-0963">Cytoplasm</keyword>
<keyword id="KW-0456">Lyase</keyword>
<keyword id="KW-0479">Metal-binding</keyword>
<keyword id="KW-0520">NAD</keyword>
<keyword id="KW-0547">Nucleotide-binding</keyword>
<keyword id="KW-0862">Zinc</keyword>
<proteinExistence type="inferred from homology"/>